<dbReference type="EC" id="2.4.1.221" evidence="2"/>
<dbReference type="EMBL" id="AJ879586">
    <property type="protein sequence ID" value="CAI52076.1"/>
    <property type="status" value="ALT_INIT"/>
    <property type="molecule type" value="mRNA"/>
</dbReference>
<dbReference type="EMBL" id="BC163176">
    <property type="protein sequence ID" value="AAI63176.1"/>
    <property type="status" value="ALT_INIT"/>
    <property type="molecule type" value="mRNA"/>
</dbReference>
<dbReference type="RefSeq" id="NP_001012374.1">
    <property type="nucleotide sequence ID" value="NM_001012374.1"/>
</dbReference>
<dbReference type="SMR" id="Q5F2N3"/>
<dbReference type="FunCoup" id="Q5F2N3">
    <property type="interactions" value="600"/>
</dbReference>
<dbReference type="STRING" id="7955.ENSDARP00000155202"/>
<dbReference type="CAZy" id="GT10">
    <property type="family name" value="Glycosyltransferase Family 10"/>
</dbReference>
<dbReference type="GlyCosmos" id="Q5F2N3">
    <property type="glycosylation" value="4 sites, No reported glycans"/>
</dbReference>
<dbReference type="PaxDb" id="7955-ENSDARP00000042310"/>
<dbReference type="Ensembl" id="ENSDART00000161506">
    <molecule id="Q5F2N3-1"/>
    <property type="protein sequence ID" value="ENSDARP00000135630"/>
    <property type="gene ID" value="ENSDARG00000100322"/>
</dbReference>
<dbReference type="GeneID" id="497615"/>
<dbReference type="KEGG" id="dre:497615"/>
<dbReference type="AGR" id="ZFIN:ZDB-GENE-081022-183"/>
<dbReference type="CTD" id="84750"/>
<dbReference type="ZFIN" id="ZDB-GENE-081022-183">
    <property type="gene designation" value="fut10"/>
</dbReference>
<dbReference type="eggNOG" id="KOG2619">
    <property type="taxonomic scope" value="Eukaryota"/>
</dbReference>
<dbReference type="InParanoid" id="Q5F2N3"/>
<dbReference type="OrthoDB" id="9993460at2759"/>
<dbReference type="PhylomeDB" id="Q5F2N3"/>
<dbReference type="Reactome" id="R-DRE-9037629">
    <property type="pathway name" value="Lewis blood group biosynthesis"/>
</dbReference>
<dbReference type="UniPathway" id="UPA00378"/>
<dbReference type="PRO" id="PR:Q5F2N3"/>
<dbReference type="Proteomes" id="UP000000437">
    <property type="component" value="Chromosome 10"/>
</dbReference>
<dbReference type="Bgee" id="ENSDARG00000100322">
    <property type="expression patterns" value="Expressed in gastrula and 18 other cell types or tissues"/>
</dbReference>
<dbReference type="ExpressionAtlas" id="Q5F2N3">
    <property type="expression patterns" value="baseline"/>
</dbReference>
<dbReference type="GO" id="GO:0005783">
    <property type="term" value="C:endoplasmic reticulum"/>
    <property type="evidence" value="ECO:0000250"/>
    <property type="project" value="UniProtKB"/>
</dbReference>
<dbReference type="GO" id="GO:0005789">
    <property type="term" value="C:endoplasmic reticulum membrane"/>
    <property type="evidence" value="ECO:0007669"/>
    <property type="project" value="UniProtKB-SubCell"/>
</dbReference>
<dbReference type="GO" id="GO:0000139">
    <property type="term" value="C:Golgi membrane"/>
    <property type="evidence" value="ECO:0007669"/>
    <property type="project" value="InterPro"/>
</dbReference>
<dbReference type="GO" id="GO:0046920">
    <property type="term" value="F:alpha-(1-&gt;3)-fucosyltransferase activity"/>
    <property type="evidence" value="ECO:0000318"/>
    <property type="project" value="GO_Central"/>
</dbReference>
<dbReference type="GO" id="GO:0046922">
    <property type="term" value="F:peptide-O-fucosyltransferase activity"/>
    <property type="evidence" value="ECO:0000250"/>
    <property type="project" value="UniProtKB"/>
</dbReference>
<dbReference type="GO" id="GO:0036065">
    <property type="term" value="P:fucosylation"/>
    <property type="evidence" value="ECO:0000318"/>
    <property type="project" value="GO_Central"/>
</dbReference>
<dbReference type="GO" id="GO:0050714">
    <property type="term" value="P:positive regulation of protein secretion"/>
    <property type="evidence" value="ECO:0000250"/>
    <property type="project" value="UniProtKB"/>
</dbReference>
<dbReference type="FunFam" id="3.40.50.11660:FF:000002">
    <property type="entry name" value="Alpha-(1,3)-fucosyltransferase"/>
    <property type="match status" value="1"/>
</dbReference>
<dbReference type="Gene3D" id="3.40.50.11660">
    <property type="entry name" value="Glycosyl transferase family 10, C-terminal domain"/>
    <property type="match status" value="1"/>
</dbReference>
<dbReference type="InterPro" id="IPR017176">
    <property type="entry name" value="Alpha-1_3-FUT_met"/>
</dbReference>
<dbReference type="InterPro" id="IPR055270">
    <property type="entry name" value="Glyco_tran_10_C"/>
</dbReference>
<dbReference type="InterPro" id="IPR031481">
    <property type="entry name" value="Glyco_tran_10_N"/>
</dbReference>
<dbReference type="InterPro" id="IPR001503">
    <property type="entry name" value="Glyco_trans_10"/>
</dbReference>
<dbReference type="InterPro" id="IPR038577">
    <property type="entry name" value="GT10-like_C_sf"/>
</dbReference>
<dbReference type="PANTHER" id="PTHR11929">
    <property type="entry name" value="ALPHA- 1,3 -FUCOSYLTRANSFERASE"/>
    <property type="match status" value="1"/>
</dbReference>
<dbReference type="PANTHER" id="PTHR11929:SF194">
    <property type="entry name" value="ALPHA-(1,3)-FUCOSYLTRANSFERASE 10"/>
    <property type="match status" value="1"/>
</dbReference>
<dbReference type="Pfam" id="PF17039">
    <property type="entry name" value="Glyco_tran_10_N"/>
    <property type="match status" value="1"/>
</dbReference>
<dbReference type="Pfam" id="PF00852">
    <property type="entry name" value="Glyco_transf_10"/>
    <property type="match status" value="1"/>
</dbReference>
<dbReference type="PIRSF" id="PIRSF037332">
    <property type="entry name" value="Alpha1_3FUT_met"/>
    <property type="match status" value="1"/>
</dbReference>
<dbReference type="SUPFAM" id="SSF53756">
    <property type="entry name" value="UDP-Glycosyltransferase/glycogen phosphorylase"/>
    <property type="match status" value="1"/>
</dbReference>
<name>OFUT3_DANRE</name>
<evidence type="ECO:0000250" key="1">
    <source>
        <dbReference type="UniProtKB" id="Q11130"/>
    </source>
</evidence>
<evidence type="ECO:0000250" key="2">
    <source>
        <dbReference type="UniProtKB" id="Q6P4F1"/>
    </source>
</evidence>
<evidence type="ECO:0000255" key="3"/>
<evidence type="ECO:0000303" key="4">
    <source ref="1"/>
</evidence>
<evidence type="ECO:0000305" key="5"/>
<accession>Q5F2N3</accession>
<accession>B3DIM2</accession>
<gene>
    <name type="primary">fut10</name>
    <name evidence="2" type="synonym">pofut3</name>
    <name type="ORF">zgc:195147</name>
</gene>
<protein>
    <recommendedName>
        <fullName>GDP-fucose protein O-fucosyltransferase 3</fullName>
        <ecNumber evidence="2">2.4.1.221</ecNumber>
    </recommendedName>
    <alternativeName>
        <fullName>Fucosyltransferase X</fullName>
        <shortName>Fuc-TX</shortName>
        <shortName>FucT-X</shortName>
    </alternativeName>
    <alternativeName>
        <fullName>Galactoside 3-L-fucosyltransferase 10</fullName>
        <shortName>Fucosyltransferase 10</shortName>
    </alternativeName>
</protein>
<sequence>MRRISVKKLCSFCLCACAFAFLVMTFQVIELLGQFEQTEHRQQIKRFEDIKVQANAHVSDVQYPVIVWWSPLTGELGRLGECGHNRCFFTVNKSYYSHPQTKAFLFYGTDFSIESLPLPRHKQHQWALFHEESPKNNYKLFHKPLITQFNHTATFSRHSHLPLTTQHLEDINTLTAQTHLLPLSYKNHLRQTLAPVVYVQSDCDPPSDRDTYIRELMQHIQVDSYGQCLHNKDLPPHLRDSTAMDDQDFYKILAQYKFILAFENAVCDDYITEKLWRPLKLGVVPVYYGAPNIHMWLPDNQSAIVVNPNEPPKKLAQYLKRLDKNDWEYLKYLEWKHKREITNINLLKELKERPWGVQDITQDNFIDVFECMVCSRVWENIHRQEEKLPPKVWRAEESHLTCPPPKLFDFALSSSSSLRQMWGASYEQSKREARALAQMLHTNTNFTITQFWREVFTD</sequence>
<organism>
    <name type="scientific">Danio rerio</name>
    <name type="common">Zebrafish</name>
    <name type="synonym">Brachydanio rerio</name>
    <dbReference type="NCBI Taxonomy" id="7955"/>
    <lineage>
        <taxon>Eukaryota</taxon>
        <taxon>Metazoa</taxon>
        <taxon>Chordata</taxon>
        <taxon>Craniata</taxon>
        <taxon>Vertebrata</taxon>
        <taxon>Euteleostomi</taxon>
        <taxon>Actinopterygii</taxon>
        <taxon>Neopterygii</taxon>
        <taxon>Teleostei</taxon>
        <taxon>Ostariophysi</taxon>
        <taxon>Cypriniformes</taxon>
        <taxon>Danionidae</taxon>
        <taxon>Danioninae</taxon>
        <taxon>Danio</taxon>
    </lineage>
</organism>
<reference key="1">
    <citation type="submission" date="2005-02" db="EMBL/GenBank/DDBJ databases">
        <title>Phylogeny of fucosyltransferases.</title>
        <authorList>
            <person name="Martinez-Duncker I."/>
            <person name="Oriol R."/>
            <person name="Mollicone R."/>
        </authorList>
    </citation>
    <scope>NUCLEOTIDE SEQUENCE [MRNA] (ISOFORM 2)</scope>
</reference>
<reference key="2">
    <citation type="submission" date="2008-04" db="EMBL/GenBank/DDBJ databases">
        <authorList>
            <consortium name="NIH - Zebrafish Gene Collection (ZGC) project"/>
        </authorList>
    </citation>
    <scope>NUCLEOTIDE SEQUENCE [LARGE SCALE MRNA] (ISOFORM 1)</scope>
</reference>
<comment type="function">
    <text evidence="2">Protein O-fucosyltransferase that specifically catalyzes O-fucosylation of serine or threonine residues in EMI domains of target proteins. Attaches fucose through an O-glycosidic linkage. O-fucosylation of EMI domain-containing proteins may be required for facilitating protein folding and secretion.</text>
</comment>
<comment type="catalytic activity">
    <reaction evidence="2">
        <text>L-threonyl-[protein] + GDP-beta-L-fucose = 3-O-(alpha-L-fucosyl)-L-threonyl-[protein] + GDP + H(+)</text>
        <dbReference type="Rhea" id="RHEA:70491"/>
        <dbReference type="Rhea" id="RHEA-COMP:11060"/>
        <dbReference type="Rhea" id="RHEA-COMP:17915"/>
        <dbReference type="ChEBI" id="CHEBI:15378"/>
        <dbReference type="ChEBI" id="CHEBI:30013"/>
        <dbReference type="ChEBI" id="CHEBI:57273"/>
        <dbReference type="ChEBI" id="CHEBI:58189"/>
        <dbReference type="ChEBI" id="CHEBI:189631"/>
        <dbReference type="EC" id="2.4.1.221"/>
    </reaction>
    <physiologicalReaction direction="left-to-right" evidence="2">
        <dbReference type="Rhea" id="RHEA:70492"/>
    </physiologicalReaction>
</comment>
<comment type="catalytic activity">
    <reaction evidence="2">
        <text>L-seryl-[protein] + GDP-beta-L-fucose = 3-O-(alpha-L-fucosyl)-L-seryl-[protein] + GDP + H(+)</text>
        <dbReference type="Rhea" id="RHEA:63644"/>
        <dbReference type="Rhea" id="RHEA-COMP:9863"/>
        <dbReference type="Rhea" id="RHEA-COMP:17914"/>
        <dbReference type="ChEBI" id="CHEBI:15378"/>
        <dbReference type="ChEBI" id="CHEBI:29999"/>
        <dbReference type="ChEBI" id="CHEBI:57273"/>
        <dbReference type="ChEBI" id="CHEBI:58189"/>
        <dbReference type="ChEBI" id="CHEBI:189632"/>
        <dbReference type="EC" id="2.4.1.221"/>
    </reaction>
    <physiologicalReaction direction="left-to-right" evidence="2">
        <dbReference type="Rhea" id="RHEA:63645"/>
    </physiologicalReaction>
</comment>
<comment type="pathway">
    <text evidence="2">Protein modification; protein glycosylation.</text>
</comment>
<comment type="subcellular location">
    <subcellularLocation>
        <location evidence="2">Endoplasmic reticulum membrane</location>
        <topology evidence="3">Single-pass type II membrane protein</topology>
    </subcellularLocation>
</comment>
<comment type="alternative products">
    <event type="alternative splicing"/>
    <isoform>
        <id>Q5F2N3-1</id>
        <name>1</name>
        <sequence type="displayed"/>
    </isoform>
    <isoform>
        <id>Q5F2N3-2</id>
        <name>2</name>
        <sequence type="described" ref="VSP_036603 VSP_036604"/>
    </isoform>
</comment>
<comment type="similarity">
    <text evidence="5">Belongs to the glycosyltransferase 10 family.</text>
</comment>
<comment type="sequence caution" evidence="5">
    <conflict type="erroneous initiation">
        <sequence resource="EMBL-CDS" id="AAI63176"/>
    </conflict>
</comment>
<comment type="sequence caution" evidence="5">
    <conflict type="erroneous initiation">
        <sequence resource="EMBL-CDS" id="CAI52076"/>
    </conflict>
</comment>
<keyword id="KW-0025">Alternative splicing</keyword>
<keyword id="KW-1015">Disulfide bond</keyword>
<keyword id="KW-0256">Endoplasmic reticulum</keyword>
<keyword id="KW-0325">Glycoprotein</keyword>
<keyword id="KW-0328">Glycosyltransferase</keyword>
<keyword id="KW-0472">Membrane</keyword>
<keyword id="KW-1185">Reference proteome</keyword>
<keyword id="KW-0735">Signal-anchor</keyword>
<keyword id="KW-0808">Transferase</keyword>
<keyword id="KW-0812">Transmembrane</keyword>
<keyword id="KW-1133">Transmembrane helix</keyword>
<proteinExistence type="evidence at transcript level"/>
<feature type="chain" id="PRO_0000299006" description="GDP-fucose protein O-fucosyltransferase 3">
    <location>
        <begin position="1"/>
        <end position="458"/>
    </location>
</feature>
<feature type="topological domain" description="Cytoplasmic" evidence="3">
    <location>
        <begin position="1"/>
        <end position="11"/>
    </location>
</feature>
<feature type="transmembrane region" description="Helical; Signal-anchor for type II membrane protein" evidence="3">
    <location>
        <begin position="12"/>
        <end position="32"/>
    </location>
</feature>
<feature type="topological domain" description="Lumenal" evidence="3">
    <location>
        <begin position="33"/>
        <end position="458"/>
    </location>
</feature>
<feature type="glycosylation site" description="N-linked (GlcNAc...) asparagine" evidence="3">
    <location>
        <position position="92"/>
    </location>
</feature>
<feature type="glycosylation site" description="N-linked (GlcNAc...) asparagine" evidence="3">
    <location>
        <position position="150"/>
    </location>
</feature>
<feature type="glycosylation site" description="N-linked (GlcNAc...) asparagine" evidence="3">
    <location>
        <position position="300"/>
    </location>
</feature>
<feature type="glycosylation site" description="N-linked (GlcNAc...) asparagine" evidence="3">
    <location>
        <position position="445"/>
    </location>
</feature>
<feature type="disulfide bond" evidence="1">
    <location>
        <begin position="371"/>
        <end position="374"/>
    </location>
</feature>
<feature type="splice variant" id="VSP_036603" description="In isoform 2." evidence="4">
    <location>
        <begin position="28"/>
        <end position="30"/>
    </location>
</feature>
<feature type="splice variant" id="VSP_036604" description="In isoform 2." evidence="4">
    <location>
        <position position="387"/>
    </location>
</feature>
<feature type="sequence conflict" description="In Ref. 2; AAI63176." evidence="5" ref="2">
    <original>S</original>
    <variation>T</variation>
    <location>
        <position position="11"/>
    </location>
</feature>
<feature type="sequence conflict" description="In Ref. 2; AAI63176." evidence="5" ref="2">
    <original>A</original>
    <variation>V</variation>
    <location>
        <position position="54"/>
    </location>
</feature>
<feature type="sequence conflict" description="In Ref. 2; AAI63176." evidence="5" ref="2">
    <original>P</original>
    <variation>A</variation>
    <location>
        <position position="99"/>
    </location>
</feature>
<feature type="sequence conflict" description="In Ref. 2; AAI63176." evidence="5" ref="2">
    <original>K</original>
    <variation>E</variation>
    <location>
        <position position="102"/>
    </location>
</feature>
<feature type="sequence conflict" description="In Ref. 2; AAI63176." evidence="5" ref="2">
    <original>P</original>
    <variation>S</variation>
    <location>
        <position position="389"/>
    </location>
</feature>
<feature type="sequence conflict" description="In Ref. 2; AAI63176." evidence="5" ref="2">
    <original>R</original>
    <variation>K</variation>
    <location>
        <position position="453"/>
    </location>
</feature>